<sequence length="251" mass="26974">MSGHSKWATTKHKKAAIDAKRGKLFAKLIKNIEIAARLGGGDPDGNPSLYDAIYKAKKASMPADNIARAVKRGAGAEDGAANYEDIVYEGYAPAGVGLIIECLTDNRNRAAAEVRSTLTKGNGSLATSGSVSFNFERKGQIVVPSEGVDFDKLFETAAEAGAEDVTDDGEVFTVVTGPSDLFTVRKALQEAGFDYDSADQVMQPKNEVELSLEDARKVSKLIDNLDDLDDVQNIYSNWTASDEVMAQLDEE</sequence>
<proteinExistence type="inferred from homology"/>
<protein>
    <recommendedName>
        <fullName evidence="1">Probable transcriptional regulatory protein BLD_0450</fullName>
    </recommendedName>
</protein>
<reference key="1">
    <citation type="journal article" date="2008" name="BMC Genomics">
        <title>Comparative genomic analysis of the gut bacterium Bifidobacterium longum reveals loci susceptible to deletion during pure culture growth.</title>
        <authorList>
            <person name="Lee J.H."/>
            <person name="Karamychev V.N."/>
            <person name="Kozyavkin S.A."/>
            <person name="Mills D."/>
            <person name="Pavlov A.R."/>
            <person name="Pavlova N.V."/>
            <person name="Polouchine N.N."/>
            <person name="Richardson P.M."/>
            <person name="Shakhova V.V."/>
            <person name="Slesarev A.I."/>
            <person name="Weimer B."/>
            <person name="O'Sullivan D.J."/>
        </authorList>
    </citation>
    <scope>NUCLEOTIDE SEQUENCE [LARGE SCALE GENOMIC DNA]</scope>
    <source>
        <strain>DJO10A</strain>
    </source>
</reference>
<dbReference type="EMBL" id="CP000605">
    <property type="protein sequence ID" value="ACD97896.1"/>
    <property type="molecule type" value="Genomic_DNA"/>
</dbReference>
<dbReference type="RefSeq" id="WP_007052855.1">
    <property type="nucleotide sequence ID" value="NZ_AABM02000001.1"/>
</dbReference>
<dbReference type="SMR" id="B3DRX7"/>
<dbReference type="KEGG" id="blj:BLD_0450"/>
<dbReference type="HOGENOM" id="CLU_062974_2_2_11"/>
<dbReference type="Proteomes" id="UP000002419">
    <property type="component" value="Chromosome"/>
</dbReference>
<dbReference type="GO" id="GO:0005829">
    <property type="term" value="C:cytosol"/>
    <property type="evidence" value="ECO:0007669"/>
    <property type="project" value="TreeGrafter"/>
</dbReference>
<dbReference type="GO" id="GO:0003677">
    <property type="term" value="F:DNA binding"/>
    <property type="evidence" value="ECO:0007669"/>
    <property type="project" value="UniProtKB-UniRule"/>
</dbReference>
<dbReference type="GO" id="GO:0006355">
    <property type="term" value="P:regulation of DNA-templated transcription"/>
    <property type="evidence" value="ECO:0007669"/>
    <property type="project" value="UniProtKB-UniRule"/>
</dbReference>
<dbReference type="FunFam" id="1.10.10.200:FF:000002">
    <property type="entry name" value="Probable transcriptional regulatory protein CLM62_37755"/>
    <property type="match status" value="1"/>
</dbReference>
<dbReference type="Gene3D" id="1.10.10.200">
    <property type="match status" value="1"/>
</dbReference>
<dbReference type="Gene3D" id="3.30.70.980">
    <property type="match status" value="2"/>
</dbReference>
<dbReference type="HAMAP" id="MF_00693">
    <property type="entry name" value="Transcrip_reg_TACO1"/>
    <property type="match status" value="1"/>
</dbReference>
<dbReference type="InterPro" id="IPR017856">
    <property type="entry name" value="Integrase-like_N"/>
</dbReference>
<dbReference type="InterPro" id="IPR048300">
    <property type="entry name" value="TACO1_YebC-like_2nd/3rd_dom"/>
</dbReference>
<dbReference type="InterPro" id="IPR049083">
    <property type="entry name" value="TACO1_YebC_N"/>
</dbReference>
<dbReference type="InterPro" id="IPR002876">
    <property type="entry name" value="Transcrip_reg_TACO1-like"/>
</dbReference>
<dbReference type="InterPro" id="IPR026564">
    <property type="entry name" value="Transcrip_reg_TACO1-like_dom3"/>
</dbReference>
<dbReference type="InterPro" id="IPR029072">
    <property type="entry name" value="YebC-like"/>
</dbReference>
<dbReference type="NCBIfam" id="NF001030">
    <property type="entry name" value="PRK00110.1"/>
    <property type="match status" value="1"/>
</dbReference>
<dbReference type="NCBIfam" id="NF009044">
    <property type="entry name" value="PRK12378.1"/>
    <property type="match status" value="1"/>
</dbReference>
<dbReference type="NCBIfam" id="TIGR01033">
    <property type="entry name" value="YebC/PmpR family DNA-binding transcriptional regulator"/>
    <property type="match status" value="1"/>
</dbReference>
<dbReference type="PANTHER" id="PTHR12532:SF6">
    <property type="entry name" value="TRANSCRIPTIONAL REGULATORY PROTEIN YEBC-RELATED"/>
    <property type="match status" value="1"/>
</dbReference>
<dbReference type="PANTHER" id="PTHR12532">
    <property type="entry name" value="TRANSLATIONAL ACTIVATOR OF CYTOCHROME C OXIDASE 1"/>
    <property type="match status" value="1"/>
</dbReference>
<dbReference type="Pfam" id="PF20772">
    <property type="entry name" value="TACO1_YebC_N"/>
    <property type="match status" value="1"/>
</dbReference>
<dbReference type="Pfam" id="PF01709">
    <property type="entry name" value="Transcrip_reg"/>
    <property type="match status" value="1"/>
</dbReference>
<dbReference type="SUPFAM" id="SSF75625">
    <property type="entry name" value="YebC-like"/>
    <property type="match status" value="1"/>
</dbReference>
<feature type="chain" id="PRO_1000132156" description="Probable transcriptional regulatory protein BLD_0450">
    <location>
        <begin position="1"/>
        <end position="251"/>
    </location>
</feature>
<keyword id="KW-0963">Cytoplasm</keyword>
<keyword id="KW-0238">DNA-binding</keyword>
<keyword id="KW-0804">Transcription</keyword>
<keyword id="KW-0805">Transcription regulation</keyword>
<comment type="subcellular location">
    <subcellularLocation>
        <location evidence="1">Cytoplasm</location>
    </subcellularLocation>
</comment>
<comment type="similarity">
    <text evidence="1">Belongs to the TACO1 family.</text>
</comment>
<name>Y450_BIFLD</name>
<accession>B3DRX7</accession>
<gene>
    <name type="ordered locus">BLD_0450</name>
</gene>
<organism>
    <name type="scientific">Bifidobacterium longum (strain DJO10A)</name>
    <dbReference type="NCBI Taxonomy" id="205913"/>
    <lineage>
        <taxon>Bacteria</taxon>
        <taxon>Bacillati</taxon>
        <taxon>Actinomycetota</taxon>
        <taxon>Actinomycetes</taxon>
        <taxon>Bifidobacteriales</taxon>
        <taxon>Bifidobacteriaceae</taxon>
        <taxon>Bifidobacterium</taxon>
    </lineage>
</organism>
<evidence type="ECO:0000255" key="1">
    <source>
        <dbReference type="HAMAP-Rule" id="MF_00693"/>
    </source>
</evidence>